<feature type="signal peptide" evidence="1">
    <location>
        <begin position="1"/>
        <end position="21"/>
    </location>
</feature>
<feature type="chain" id="PRO_0000020100" description="Outer membrane protein A" evidence="1">
    <location>
        <begin position="22"/>
        <end position="359"/>
    </location>
</feature>
<feature type="transmembrane region" description="Beta stranded" evidence="1">
    <location>
        <begin position="27"/>
        <end position="37"/>
    </location>
</feature>
<feature type="transmembrane region" description="Beta stranded" evidence="1">
    <location>
        <begin position="62"/>
        <end position="73"/>
    </location>
</feature>
<feature type="transmembrane region" description="Beta stranded" evidence="1">
    <location>
        <begin position="77"/>
        <end position="85"/>
    </location>
</feature>
<feature type="transmembrane region" description="Beta stranded" evidence="1">
    <location>
        <begin position="103"/>
        <end position="114"/>
    </location>
</feature>
<feature type="transmembrane region" description="Beta stranded" evidence="1">
    <location>
        <begin position="119"/>
        <end position="127"/>
    </location>
</feature>
<feature type="transmembrane region" description="Beta stranded" evidence="1">
    <location>
        <begin position="154"/>
        <end position="163"/>
    </location>
</feature>
<feature type="transmembrane region" description="Beta stranded" evidence="1">
    <location>
        <begin position="168"/>
        <end position="175"/>
    </location>
</feature>
<feature type="transmembrane region" description="Beta stranded" evidence="1">
    <location>
        <begin position="194"/>
        <end position="202"/>
    </location>
</feature>
<feature type="repeat" description="1">
    <location>
        <begin position="210"/>
        <end position="211"/>
    </location>
</feature>
<feature type="repeat" description="2">
    <location>
        <begin position="212"/>
        <end position="213"/>
    </location>
</feature>
<feature type="repeat" description="3">
    <location>
        <begin position="214"/>
        <end position="215"/>
    </location>
</feature>
<feature type="repeat" description="4">
    <location>
        <begin position="216"/>
        <end position="217"/>
    </location>
</feature>
<feature type="repeat" description="5">
    <location>
        <begin position="218"/>
        <end position="219"/>
    </location>
</feature>
<feature type="domain" description="OmpA-like" evidence="1">
    <location>
        <begin position="221"/>
        <end position="351"/>
    </location>
</feature>
<feature type="region of interest" description="5 X 2 AA tandem repeats of A-P">
    <location>
        <begin position="210"/>
        <end position="219"/>
    </location>
</feature>
<feature type="site" description="Part of salt bridge gating mechanism" evidence="1">
    <location>
        <position position="80"/>
    </location>
</feature>
<feature type="site" description="Part of salt bridge gating mechanism" evidence="1">
    <location>
        <position position="171"/>
    </location>
</feature>
<feature type="disulfide bond" evidence="1">
    <location>
        <begin position="322"/>
        <end position="336"/>
    </location>
</feature>
<proteinExistence type="inferred from homology"/>
<sequence>MKKTAIALAVALAGFATVAQAAPKDNTWYTGAKLGWSQYHDTGFYGNGYQNGIGNGPTHKDQLGAGAFLGYQANQYLGFELGYDWLGRMPYKGSVNNGAFKAQGVQLAAKLSYPIADDLDIYTRLGGMVWRADSKANYGRTGQRLSDHDTGVSPLAAVGVEYALTKNWATRLDYQFVSNIGDAGTVGARPDNTMLSLGVSYRFGQDDVVAPAPAPAPAPVVETKRFTLKSDVLFNFNKSTLKAEGQQALDQLYTQLSSMDPKDGSVVVLGYTDAVGSDQYNQKLSEQRAQSVVDYLVSKGIPSDKISARGMGEADAVTGNTCGYKSGRATKAQIVCLAPDRRVEIEVKGIKDVVTQPQG</sequence>
<name>OMPA_SERMA</name>
<accession>P04845</accession>
<gene>
    <name evidence="1" type="primary">ompA</name>
</gene>
<keyword id="KW-0998">Cell outer membrane</keyword>
<keyword id="KW-1015">Disulfide bond</keyword>
<keyword id="KW-0406">Ion transport</keyword>
<keyword id="KW-0472">Membrane</keyword>
<keyword id="KW-0626">Porin</keyword>
<keyword id="KW-0677">Repeat</keyword>
<keyword id="KW-0732">Signal</keyword>
<keyword id="KW-0812">Transmembrane</keyword>
<keyword id="KW-1134">Transmembrane beta strand</keyword>
<keyword id="KW-0813">Transport</keyword>
<protein>
    <recommendedName>
        <fullName evidence="1">Outer membrane protein A</fullName>
    </recommendedName>
    <alternativeName>
        <fullName evidence="1">Outer membrane porin A</fullName>
    </alternativeName>
</protein>
<evidence type="ECO:0000255" key="1">
    <source>
        <dbReference type="HAMAP-Rule" id="MF_00842"/>
    </source>
</evidence>
<organism>
    <name type="scientific">Serratia marcescens</name>
    <dbReference type="NCBI Taxonomy" id="615"/>
    <lineage>
        <taxon>Bacteria</taxon>
        <taxon>Pseudomonadati</taxon>
        <taxon>Pseudomonadota</taxon>
        <taxon>Gammaproteobacteria</taxon>
        <taxon>Enterobacterales</taxon>
        <taxon>Yersiniaceae</taxon>
        <taxon>Serratia</taxon>
    </lineage>
</organism>
<dbReference type="EMBL" id="X00618">
    <property type="protein sequence ID" value="CAA25254.1"/>
    <property type="molecule type" value="Genomic_DNA"/>
</dbReference>
<dbReference type="PIR" id="S07298">
    <property type="entry name" value="S07298"/>
</dbReference>
<dbReference type="SMR" id="P04845"/>
<dbReference type="STRING" id="273526.SMDB11_1037"/>
<dbReference type="GO" id="GO:0009279">
    <property type="term" value="C:cell outer membrane"/>
    <property type="evidence" value="ECO:0007669"/>
    <property type="project" value="UniProtKB-SubCell"/>
</dbReference>
<dbReference type="GO" id="GO:0046930">
    <property type="term" value="C:pore complex"/>
    <property type="evidence" value="ECO:0007669"/>
    <property type="project" value="UniProtKB-KW"/>
</dbReference>
<dbReference type="GO" id="GO:0015288">
    <property type="term" value="F:porin activity"/>
    <property type="evidence" value="ECO:0007669"/>
    <property type="project" value="UniProtKB-UniRule"/>
</dbReference>
<dbReference type="GO" id="GO:0034220">
    <property type="term" value="P:monoatomic ion transmembrane transport"/>
    <property type="evidence" value="ECO:0007669"/>
    <property type="project" value="UniProtKB-UniRule"/>
</dbReference>
<dbReference type="CDD" id="cd07185">
    <property type="entry name" value="OmpA_C-like"/>
    <property type="match status" value="1"/>
</dbReference>
<dbReference type="FunFam" id="3.30.1330.60:FF:000004">
    <property type="entry name" value="Outer membrane protein A"/>
    <property type="match status" value="1"/>
</dbReference>
<dbReference type="Gene3D" id="2.40.160.20">
    <property type="match status" value="1"/>
</dbReference>
<dbReference type="Gene3D" id="3.30.1330.60">
    <property type="entry name" value="OmpA-like domain"/>
    <property type="match status" value="1"/>
</dbReference>
<dbReference type="HAMAP" id="MF_00842">
    <property type="entry name" value="OmpA"/>
    <property type="match status" value="1"/>
</dbReference>
<dbReference type="InterPro" id="IPR050330">
    <property type="entry name" value="Bact_OuterMem_StrucFunc"/>
</dbReference>
<dbReference type="InterPro" id="IPR011250">
    <property type="entry name" value="OMP/PagP_b-brl"/>
</dbReference>
<dbReference type="InterPro" id="IPR006664">
    <property type="entry name" value="OMP_bac"/>
</dbReference>
<dbReference type="InterPro" id="IPR002368">
    <property type="entry name" value="OmpA"/>
</dbReference>
<dbReference type="InterPro" id="IPR006665">
    <property type="entry name" value="OmpA-like"/>
</dbReference>
<dbReference type="InterPro" id="IPR006690">
    <property type="entry name" value="OMPA-like_CS"/>
</dbReference>
<dbReference type="InterPro" id="IPR036737">
    <property type="entry name" value="OmpA-like_sf"/>
</dbReference>
<dbReference type="InterPro" id="IPR000498">
    <property type="entry name" value="OmpA-like_TM_dom"/>
</dbReference>
<dbReference type="NCBIfam" id="NF008071">
    <property type="entry name" value="PRK10808.1"/>
    <property type="match status" value="1"/>
</dbReference>
<dbReference type="PANTHER" id="PTHR30329:SF21">
    <property type="entry name" value="LIPOPROTEIN YIAD-RELATED"/>
    <property type="match status" value="1"/>
</dbReference>
<dbReference type="PANTHER" id="PTHR30329">
    <property type="entry name" value="STATOR ELEMENT OF FLAGELLAR MOTOR COMPLEX"/>
    <property type="match status" value="1"/>
</dbReference>
<dbReference type="Pfam" id="PF00691">
    <property type="entry name" value="OmpA"/>
    <property type="match status" value="1"/>
</dbReference>
<dbReference type="Pfam" id="PF01389">
    <property type="entry name" value="OmpA_membrane"/>
    <property type="match status" value="1"/>
</dbReference>
<dbReference type="PRINTS" id="PR01021">
    <property type="entry name" value="OMPADOMAIN"/>
</dbReference>
<dbReference type="PRINTS" id="PR01022">
    <property type="entry name" value="OUTRMMBRANEA"/>
</dbReference>
<dbReference type="SUPFAM" id="SSF56925">
    <property type="entry name" value="OMPA-like"/>
    <property type="match status" value="1"/>
</dbReference>
<dbReference type="SUPFAM" id="SSF103088">
    <property type="entry name" value="OmpA-like"/>
    <property type="match status" value="1"/>
</dbReference>
<dbReference type="PROSITE" id="PS01068">
    <property type="entry name" value="OMPA_1"/>
    <property type="match status" value="1"/>
</dbReference>
<dbReference type="PROSITE" id="PS51123">
    <property type="entry name" value="OMPA_2"/>
    <property type="match status" value="1"/>
</dbReference>
<reference key="1">
    <citation type="journal article" date="1984" name="Mol. Gen. Genet.">
        <title>DNA sequence analysis of the Serratia marcescens ompA gene: implications for the organisation of an enterobacterial outer membrane protein.</title>
        <authorList>
            <person name="Braun G."/>
            <person name="Cole S.T."/>
        </authorList>
    </citation>
    <scope>NUCLEOTIDE SEQUENCE [GENOMIC DNA]</scope>
</reference>
<comment type="function">
    <text evidence="1">With TolR probably plays a role in maintaining the position of the peptidoglycan cell wall in the periplasm. Acts as a porin with low permeability that allows slow penetration of small solutes; an internal gate slows down solute passage.</text>
</comment>
<comment type="subunit">
    <text evidence="1">Monomer and homodimer.</text>
</comment>
<comment type="subcellular location">
    <subcellularLocation>
        <location evidence="1">Cell outer membrane</location>
        <topology evidence="1">Multi-pass membrane protein</topology>
    </subcellularLocation>
</comment>
<comment type="domain">
    <text evidence="1">The extracellular loops are most variable in sequence, and in some bacteria confer sensitivity to phage and/or colicins.</text>
</comment>
<comment type="similarity">
    <text evidence="1">Belongs to the outer membrane OOP (TC 1.B.6) superfamily. OmpA family.</text>
</comment>